<keyword id="KW-0067">ATP-binding</keyword>
<keyword id="KW-0315">Glutamine amidotransferase</keyword>
<keyword id="KW-0332">GMP biosynthesis</keyword>
<keyword id="KW-0436">Ligase</keyword>
<keyword id="KW-0547">Nucleotide-binding</keyword>
<keyword id="KW-0658">Purine biosynthesis</keyword>
<keyword id="KW-1185">Reference proteome</keyword>
<accession>Q974T4</accession>
<accession>F9VN38</accession>
<dbReference type="EC" id="6.3.5.2" evidence="1"/>
<dbReference type="EMBL" id="BA000023">
    <property type="protein sequence ID" value="BAK54335.1"/>
    <property type="molecule type" value="Genomic_DNA"/>
</dbReference>
<dbReference type="RefSeq" id="WP_010978556.1">
    <property type="nucleotide sequence ID" value="NC_003106.2"/>
</dbReference>
<dbReference type="SMR" id="Q974T4"/>
<dbReference type="STRING" id="273063.STK_05780"/>
<dbReference type="MEROPS" id="C26.A31"/>
<dbReference type="GeneID" id="1458523"/>
<dbReference type="KEGG" id="sto:STK_05780"/>
<dbReference type="PATRIC" id="fig|273063.9.peg.658"/>
<dbReference type="eggNOG" id="arCOG00087">
    <property type="taxonomic scope" value="Archaea"/>
</dbReference>
<dbReference type="OrthoDB" id="33844at2157"/>
<dbReference type="UniPathway" id="UPA00189">
    <property type="reaction ID" value="UER00296"/>
</dbReference>
<dbReference type="Proteomes" id="UP000001015">
    <property type="component" value="Chromosome"/>
</dbReference>
<dbReference type="GO" id="GO:0005829">
    <property type="term" value="C:cytosol"/>
    <property type="evidence" value="ECO:0007669"/>
    <property type="project" value="TreeGrafter"/>
</dbReference>
<dbReference type="GO" id="GO:0005524">
    <property type="term" value="F:ATP binding"/>
    <property type="evidence" value="ECO:0007669"/>
    <property type="project" value="UniProtKB-KW"/>
</dbReference>
<dbReference type="GO" id="GO:0003921">
    <property type="term" value="F:GMP synthase activity"/>
    <property type="evidence" value="ECO:0007669"/>
    <property type="project" value="TreeGrafter"/>
</dbReference>
<dbReference type="CDD" id="cd01742">
    <property type="entry name" value="GATase1_GMP_Synthase"/>
    <property type="match status" value="1"/>
</dbReference>
<dbReference type="FunFam" id="3.40.50.880:FF:000047">
    <property type="entry name" value="GMP synthase [glutamine-hydrolyzing] subunit A"/>
    <property type="match status" value="1"/>
</dbReference>
<dbReference type="Gene3D" id="3.40.50.880">
    <property type="match status" value="1"/>
</dbReference>
<dbReference type="HAMAP" id="MF_01510">
    <property type="entry name" value="GMP_synthase_A"/>
    <property type="match status" value="1"/>
</dbReference>
<dbReference type="InterPro" id="IPR029062">
    <property type="entry name" value="Class_I_gatase-like"/>
</dbReference>
<dbReference type="InterPro" id="IPR017926">
    <property type="entry name" value="GATASE"/>
</dbReference>
<dbReference type="InterPro" id="IPR004739">
    <property type="entry name" value="GMP_synth_GATase"/>
</dbReference>
<dbReference type="InterPro" id="IPR023686">
    <property type="entry name" value="GMP_synthase_A"/>
</dbReference>
<dbReference type="NCBIfam" id="TIGR00888">
    <property type="entry name" value="guaA_Nterm"/>
    <property type="match status" value="1"/>
</dbReference>
<dbReference type="NCBIfam" id="NF001975">
    <property type="entry name" value="PRK00758.1"/>
    <property type="match status" value="1"/>
</dbReference>
<dbReference type="PANTHER" id="PTHR11922:SF2">
    <property type="entry name" value="GMP SYNTHASE [GLUTAMINE-HYDROLYZING]"/>
    <property type="match status" value="1"/>
</dbReference>
<dbReference type="PANTHER" id="PTHR11922">
    <property type="entry name" value="GMP SYNTHASE-RELATED"/>
    <property type="match status" value="1"/>
</dbReference>
<dbReference type="Pfam" id="PF00117">
    <property type="entry name" value="GATase"/>
    <property type="match status" value="1"/>
</dbReference>
<dbReference type="PRINTS" id="PR00097">
    <property type="entry name" value="ANTSNTHASEII"/>
</dbReference>
<dbReference type="PRINTS" id="PR00096">
    <property type="entry name" value="GATASE"/>
</dbReference>
<dbReference type="SUPFAM" id="SSF52317">
    <property type="entry name" value="Class I glutamine amidotransferase-like"/>
    <property type="match status" value="1"/>
</dbReference>
<dbReference type="PROSITE" id="PS51273">
    <property type="entry name" value="GATASE_TYPE_1"/>
    <property type="match status" value="1"/>
</dbReference>
<organism>
    <name type="scientific">Sulfurisphaera tokodaii (strain DSM 16993 / JCM 10545 / NBRC 100140 / 7)</name>
    <name type="common">Sulfolobus tokodaii</name>
    <dbReference type="NCBI Taxonomy" id="273063"/>
    <lineage>
        <taxon>Archaea</taxon>
        <taxon>Thermoproteota</taxon>
        <taxon>Thermoprotei</taxon>
        <taxon>Sulfolobales</taxon>
        <taxon>Sulfolobaceae</taxon>
        <taxon>Sulfurisphaera</taxon>
    </lineage>
</organism>
<comment type="function">
    <text evidence="1">Catalyzes the synthesis of GMP from XMP.</text>
</comment>
<comment type="catalytic activity">
    <reaction evidence="1">
        <text>XMP + L-glutamine + ATP + H2O = GMP + L-glutamate + AMP + diphosphate + 2 H(+)</text>
        <dbReference type="Rhea" id="RHEA:11680"/>
        <dbReference type="ChEBI" id="CHEBI:15377"/>
        <dbReference type="ChEBI" id="CHEBI:15378"/>
        <dbReference type="ChEBI" id="CHEBI:29985"/>
        <dbReference type="ChEBI" id="CHEBI:30616"/>
        <dbReference type="ChEBI" id="CHEBI:33019"/>
        <dbReference type="ChEBI" id="CHEBI:57464"/>
        <dbReference type="ChEBI" id="CHEBI:58115"/>
        <dbReference type="ChEBI" id="CHEBI:58359"/>
        <dbReference type="ChEBI" id="CHEBI:456215"/>
        <dbReference type="EC" id="6.3.5.2"/>
    </reaction>
</comment>
<comment type="pathway">
    <text evidence="1">Purine metabolism; GMP biosynthesis; GMP from XMP (L-Gln route): step 1/1.</text>
</comment>
<comment type="subunit">
    <text evidence="1">Heterodimer composed of a glutamine amidotransferase subunit (A) and a GMP-binding subunit (B).</text>
</comment>
<proteinExistence type="inferred from homology"/>
<feature type="chain" id="PRO_0000140234" description="GMP synthase [glutamine-hydrolyzing] subunit A">
    <location>
        <begin position="1"/>
        <end position="188"/>
    </location>
</feature>
<feature type="domain" description="Glutamine amidotransferase type-1" evidence="1">
    <location>
        <begin position="2"/>
        <end position="188"/>
    </location>
</feature>
<feature type="active site" description="Nucleophile" evidence="1">
    <location>
        <position position="79"/>
    </location>
</feature>
<feature type="active site" evidence="1">
    <location>
        <position position="166"/>
    </location>
</feature>
<feature type="active site" evidence="1">
    <location>
        <position position="168"/>
    </location>
</feature>
<gene>
    <name evidence="1" type="primary">guaAA</name>
    <name type="ordered locus">STK_05780</name>
</gene>
<name>GUAAA_SULTO</name>
<sequence>MKIAVIYFGGQYNHLIVKDLKYLGLNAVLITPEKPVEILKDYDCIIFGGGPYSVITELNKMGNAVDYVLRTSQPKLGICLGHQLLAKVLGGEVTKATKPEYGLVKVNINDEDTILRGLSPSINAWESHTDEVISPPQGFRILANSENAKVQAMVNKDNTIFGVQFHPEVKHTEKGIEVFKNFIEACKK</sequence>
<reference key="1">
    <citation type="journal article" date="2001" name="DNA Res.">
        <title>Complete genome sequence of an aerobic thermoacidophilic Crenarchaeon, Sulfolobus tokodaii strain7.</title>
        <authorList>
            <person name="Kawarabayasi Y."/>
            <person name="Hino Y."/>
            <person name="Horikawa H."/>
            <person name="Jin-no K."/>
            <person name="Takahashi M."/>
            <person name="Sekine M."/>
            <person name="Baba S."/>
            <person name="Ankai A."/>
            <person name="Kosugi H."/>
            <person name="Hosoyama A."/>
            <person name="Fukui S."/>
            <person name="Nagai Y."/>
            <person name="Nishijima K."/>
            <person name="Otsuka R."/>
            <person name="Nakazawa H."/>
            <person name="Takamiya M."/>
            <person name="Kato Y."/>
            <person name="Yoshizawa T."/>
            <person name="Tanaka T."/>
            <person name="Kudoh Y."/>
            <person name="Yamazaki J."/>
            <person name="Kushida N."/>
            <person name="Oguchi A."/>
            <person name="Aoki K."/>
            <person name="Masuda S."/>
            <person name="Yanagii M."/>
            <person name="Nishimura M."/>
            <person name="Yamagishi A."/>
            <person name="Oshima T."/>
            <person name="Kikuchi H."/>
        </authorList>
    </citation>
    <scope>NUCLEOTIDE SEQUENCE [LARGE SCALE GENOMIC DNA]</scope>
    <source>
        <strain>DSM 16993 / JCM 10545 / NBRC 100140 / 7</strain>
    </source>
</reference>
<evidence type="ECO:0000255" key="1">
    <source>
        <dbReference type="HAMAP-Rule" id="MF_01510"/>
    </source>
</evidence>
<protein>
    <recommendedName>
        <fullName evidence="1">GMP synthase [glutamine-hydrolyzing] subunit A</fullName>
        <ecNumber evidence="1">6.3.5.2</ecNumber>
    </recommendedName>
    <alternativeName>
        <fullName evidence="1">Glutamine amidotransferase</fullName>
    </alternativeName>
</protein>